<organism>
    <name type="scientific">Flammulina velutipes</name>
    <name type="common">Agaricus velutipes</name>
    <dbReference type="NCBI Taxonomy" id="38945"/>
    <lineage>
        <taxon>Eukaryota</taxon>
        <taxon>Fungi</taxon>
        <taxon>Dikarya</taxon>
        <taxon>Basidiomycota</taxon>
        <taxon>Agaricomycotina</taxon>
        <taxon>Agaricomycetes</taxon>
        <taxon>Agaricomycetidae</taxon>
        <taxon>Agaricales</taxon>
        <taxon>Marasmiineae</taxon>
        <taxon>Physalacriaceae</taxon>
        <taxon>Flammulina</taxon>
    </lineage>
</organism>
<proteinExistence type="evidence at protein level"/>
<evidence type="ECO:0000256" key="1">
    <source>
        <dbReference type="SAM" id="MobiDB-lite"/>
    </source>
</evidence>
<evidence type="ECO:0000269" key="2">
    <source>
    </source>
</evidence>
<evidence type="ECO:0000305" key="3"/>
<protein>
    <recommendedName>
        <fullName>Ribosome-inactivating protein velutin</fullName>
        <ecNumber>3.2.2.22</ecNumber>
    </recommendedName>
    <alternativeName>
        <fullName>rRNA N-glycosidase</fullName>
    </alternativeName>
</protein>
<comment type="function">
    <text evidence="2">Inhibits protein synthesis but does not possess ribonuclease activity. Also inhibits HIV-1 reverse transcriptase, beta-glucosidase and beta-glucuronidase.</text>
</comment>
<comment type="catalytic activity">
    <reaction>
        <text>Endohydrolysis of the N-glycosidic bond at one specific adenosine on the 28S rRNA.</text>
        <dbReference type="EC" id="3.2.2.22"/>
    </reaction>
</comment>
<comment type="similarity">
    <text evidence="3">Belongs to the ribosome-inactivating protein family.</text>
</comment>
<accession>P83324</accession>
<feature type="chain" id="PRO_0000221420" description="Ribosome-inactivating protein velutin">
    <location>
        <begin position="1"/>
        <end position="25" status="greater than"/>
    </location>
</feature>
<feature type="region of interest" description="Disordered" evidence="1">
    <location>
        <begin position="1"/>
        <end position="25"/>
    </location>
</feature>
<feature type="non-terminal residue">
    <location>
        <position position="25"/>
    </location>
</feature>
<dbReference type="EC" id="3.2.2.22"/>
<dbReference type="GO" id="GO:0030598">
    <property type="term" value="F:rRNA N-glycosylase activity"/>
    <property type="evidence" value="ECO:0000314"/>
    <property type="project" value="UniProtKB"/>
</dbReference>
<dbReference type="GO" id="GO:0090729">
    <property type="term" value="F:toxin activity"/>
    <property type="evidence" value="ECO:0007669"/>
    <property type="project" value="UniProtKB-KW"/>
</dbReference>
<dbReference type="GO" id="GO:0017148">
    <property type="term" value="P:negative regulation of translation"/>
    <property type="evidence" value="ECO:0000314"/>
    <property type="project" value="UniProtKB"/>
</dbReference>
<keyword id="KW-0903">Direct protein sequencing</keyword>
<keyword id="KW-0378">Hydrolase</keyword>
<keyword id="KW-0652">Protein synthesis inhibitor</keyword>
<keyword id="KW-0800">Toxin</keyword>
<sequence>XHPDLFXXRPDNTASPKFEDPRLNP</sequence>
<name>RIP_FLAVE</name>
<reference key="1">
    <citation type="journal article" date="2001" name="Life Sci.">
        <title>Isolation and characterization of velutin, a novel low-molecular-weight ribosome-inactivating protein from winter mushroom (Flammulina velutipes) fruiting bodies.</title>
        <authorList>
            <person name="Wang H."/>
            <person name="Ng T.B."/>
        </authorList>
    </citation>
    <scope>PROTEIN SEQUENCE</scope>
    <scope>FUNCTION</scope>
</reference>